<geneLocation type="plasmid">
    <name>pMOL28</name>
</geneLocation>
<accession>P37972</accession>
<accession>Q5NUX5</accession>
<name>CNRA_CUPMC</name>
<protein>
    <recommendedName>
        <fullName>Nickel and cobalt resistance protein CnrA</fullName>
    </recommendedName>
</protein>
<dbReference type="EMBL" id="M91650">
    <property type="protein sequence ID" value="AAA21970.1"/>
    <property type="molecule type" value="Genomic_DNA"/>
</dbReference>
<dbReference type="EMBL" id="X90708">
    <property type="protein sequence ID" value="CAI30227.1"/>
    <property type="molecule type" value="Genomic_DNA"/>
</dbReference>
<dbReference type="EMBL" id="CP000355">
    <property type="protein sequence ID" value="ABF13069.1"/>
    <property type="molecule type" value="Genomic_DNA"/>
</dbReference>
<dbReference type="RefSeq" id="WP_011239966.1">
    <property type="nucleotide sequence ID" value="NC_007972.2"/>
</dbReference>
<dbReference type="RefSeq" id="YP_161705.1">
    <property type="nucleotide sequence ID" value="NC_006525.1"/>
</dbReference>
<dbReference type="SMR" id="P37972"/>
<dbReference type="TCDB" id="2.A.6.1.1">
    <property type="family name" value="the resistance-nodulation-cell division (rnd) superfamily"/>
</dbReference>
<dbReference type="KEGG" id="rme:Rmet_6210"/>
<dbReference type="HOGENOM" id="CLU_002755_1_2_4"/>
<dbReference type="Proteomes" id="UP000002429">
    <property type="component" value="Plasmid pMOL28"/>
</dbReference>
<dbReference type="GO" id="GO:0005886">
    <property type="term" value="C:plasma membrane"/>
    <property type="evidence" value="ECO:0007669"/>
    <property type="project" value="UniProtKB-SubCell"/>
</dbReference>
<dbReference type="GO" id="GO:0008324">
    <property type="term" value="F:monoatomic cation transmembrane transporter activity"/>
    <property type="evidence" value="ECO:0007669"/>
    <property type="project" value="InterPro"/>
</dbReference>
<dbReference type="GO" id="GO:0042910">
    <property type="term" value="F:xenobiotic transmembrane transporter activity"/>
    <property type="evidence" value="ECO:0007669"/>
    <property type="project" value="TreeGrafter"/>
</dbReference>
<dbReference type="Gene3D" id="3.30.70.1430">
    <property type="entry name" value="Multidrug efflux transporter AcrB pore domain"/>
    <property type="match status" value="2"/>
</dbReference>
<dbReference type="Gene3D" id="3.30.70.1440">
    <property type="entry name" value="Multidrug efflux transporter AcrB pore domain"/>
    <property type="match status" value="1"/>
</dbReference>
<dbReference type="Gene3D" id="3.30.70.1320">
    <property type="entry name" value="Multidrug efflux transporter AcrB pore domain like"/>
    <property type="match status" value="1"/>
</dbReference>
<dbReference type="Gene3D" id="3.30.2090.10">
    <property type="entry name" value="Multidrug efflux transporter AcrB TolC docking domain, DN and DC subdomains"/>
    <property type="match status" value="2"/>
</dbReference>
<dbReference type="Gene3D" id="1.20.1640.10">
    <property type="entry name" value="Multidrug efflux transporter AcrB transmembrane domain"/>
    <property type="match status" value="3"/>
</dbReference>
<dbReference type="InterPro" id="IPR027463">
    <property type="entry name" value="AcrB_DN_DC_subdom"/>
</dbReference>
<dbReference type="InterPro" id="IPR001036">
    <property type="entry name" value="Acrflvin-R"/>
</dbReference>
<dbReference type="InterPro" id="IPR004763">
    <property type="entry name" value="CusA-like"/>
</dbReference>
<dbReference type="NCBIfam" id="TIGR00914">
    <property type="entry name" value="2A0601"/>
    <property type="match status" value="1"/>
</dbReference>
<dbReference type="PANTHER" id="PTHR32063">
    <property type="match status" value="1"/>
</dbReference>
<dbReference type="PANTHER" id="PTHR32063:SF24">
    <property type="entry name" value="CATION EFFLUX SYSTEM (ACRB_ACRD_ACRF FAMILY)"/>
    <property type="match status" value="1"/>
</dbReference>
<dbReference type="Pfam" id="PF00873">
    <property type="entry name" value="ACR_tran"/>
    <property type="match status" value="1"/>
</dbReference>
<dbReference type="PRINTS" id="PR00702">
    <property type="entry name" value="ACRIFLAVINRP"/>
</dbReference>
<dbReference type="SUPFAM" id="SSF82693">
    <property type="entry name" value="Multidrug efflux transporter AcrB pore domain, PN1, PN2, PC1 and PC2 subdomains"/>
    <property type="match status" value="1"/>
</dbReference>
<dbReference type="SUPFAM" id="SSF82714">
    <property type="entry name" value="Multidrug efflux transporter AcrB TolC docking domain, DN and DC subdomains"/>
    <property type="match status" value="2"/>
</dbReference>
<dbReference type="SUPFAM" id="SSF82866">
    <property type="entry name" value="Multidrug efflux transporter AcrB transmembrane domain"/>
    <property type="match status" value="2"/>
</dbReference>
<keyword id="KW-0997">Cell inner membrane</keyword>
<keyword id="KW-1003">Cell membrane</keyword>
<keyword id="KW-0170">Cobalt</keyword>
<keyword id="KW-0472">Membrane</keyword>
<keyword id="KW-0533">Nickel</keyword>
<keyword id="KW-0614">Plasmid</keyword>
<keyword id="KW-1185">Reference proteome</keyword>
<keyword id="KW-0812">Transmembrane</keyword>
<keyword id="KW-1133">Transmembrane helix</keyword>
<keyword id="KW-0813">Transport</keyword>
<feature type="chain" id="PRO_0000161814" description="Nickel and cobalt resistance protein CnrA">
    <location>
        <begin position="1"/>
        <end position="1076"/>
    </location>
</feature>
<feature type="transmembrane region" description="Helical" evidence="1">
    <location>
        <begin position="14"/>
        <end position="34"/>
    </location>
</feature>
<feature type="transmembrane region" description="Helical" evidence="1">
    <location>
        <begin position="366"/>
        <end position="386"/>
    </location>
</feature>
<feature type="transmembrane region" description="Helical" evidence="1">
    <location>
        <begin position="390"/>
        <end position="410"/>
    </location>
</feature>
<feature type="transmembrane region" description="Helical" evidence="1">
    <location>
        <begin position="418"/>
        <end position="438"/>
    </location>
</feature>
<feature type="transmembrane region" description="Helical" evidence="1">
    <location>
        <begin position="475"/>
        <end position="495"/>
    </location>
</feature>
<feature type="transmembrane region" description="Helical" evidence="1">
    <location>
        <begin position="502"/>
        <end position="522"/>
    </location>
</feature>
<feature type="transmembrane region" description="Helical" evidence="1">
    <location>
        <begin position="561"/>
        <end position="581"/>
    </location>
</feature>
<feature type="transmembrane region" description="Helical" evidence="1">
    <location>
        <begin position="903"/>
        <end position="923"/>
    </location>
</feature>
<feature type="transmembrane region" description="Helical" evidence="1">
    <location>
        <begin position="928"/>
        <end position="948"/>
    </location>
</feature>
<feature type="transmembrane region" description="Helical" evidence="1">
    <location>
        <begin position="959"/>
        <end position="979"/>
    </location>
</feature>
<feature type="transmembrane region" description="Helical" evidence="1">
    <location>
        <begin position="1003"/>
        <end position="1023"/>
    </location>
</feature>
<feature type="transmembrane region" description="Helical" evidence="1">
    <location>
        <begin position="1035"/>
        <end position="1055"/>
    </location>
</feature>
<feature type="sequence conflict" description="In Ref. 1; AAA21970." evidence="3" ref="1">
    <original>QQ</original>
    <variation>HE</variation>
    <location>
        <begin position="108"/>
        <end position="109"/>
    </location>
</feature>
<feature type="sequence conflict" description="In Ref. 1; AAA21970." evidence="3" ref="1">
    <original>QRQNVPIT</original>
    <variation>HGKMSHH</variation>
    <location>
        <begin position="281"/>
        <end position="288"/>
    </location>
</feature>
<feature type="sequence conflict" description="In Ref. 1; AAA21970." evidence="3" ref="1">
    <original>E</original>
    <variation>D</variation>
    <location>
        <position position="460"/>
    </location>
</feature>
<feature type="sequence conflict" description="In Ref. 1; AAA21970." evidence="3" ref="1">
    <original>C</original>
    <variation>S</variation>
    <location>
        <position position="490"/>
    </location>
</feature>
<feature type="sequence conflict" description="In Ref. 1; AAA21970." evidence="3" ref="1">
    <original>V</original>
    <variation>S</variation>
    <location>
        <position position="936"/>
    </location>
</feature>
<gene>
    <name type="primary">cnrA</name>
    <name type="ordered locus">Rmet_6210</name>
    <name type="ORF">RMe0083</name>
</gene>
<evidence type="ECO:0000255" key="1"/>
<evidence type="ECO:0000269" key="2">
    <source>
    </source>
</evidence>
<evidence type="ECO:0000305" key="3"/>
<comment type="function">
    <text>The products of the genes cnrA, cnrB, and cnrC are likely to form a membrane-bound protein complex catalyzing an energy-dependent efflux of Ni(2+) and Co(2+). The mechanism of action of the CnrCBA complex may be that of a proton/cation antiporter.</text>
</comment>
<comment type="subcellular location">
    <subcellularLocation>
        <location evidence="3">Cell inner membrane</location>
        <topology evidence="3">Multi-pass membrane protein</topology>
    </subcellularLocation>
</comment>
<comment type="induction">
    <text evidence="2">By nickel.</text>
</comment>
<comment type="similarity">
    <text evidence="3">Belongs to the resistance-nodulation-cell division (RND) (TC 2.A.6) family.</text>
</comment>
<reference key="1">
    <citation type="journal article" date="1993" name="J. Bacteriol.">
        <title>Characterization of the inducible nickel and cobalt resistance determinant cnr from pMOL28 of Alcaligenes eutrophus CH34.</title>
        <authorList>
            <person name="Liesegang H."/>
            <person name="Lemke K."/>
            <person name="Siddiqui R.A."/>
            <person name="Schlegel H.-G."/>
        </authorList>
    </citation>
    <scope>NUCLEOTIDE SEQUENCE [GENOMIC DNA]</scope>
</reference>
<reference key="2">
    <citation type="submission" date="2004-10" db="EMBL/GenBank/DDBJ databases">
        <title>Sequence and features of the Ralstonia metallidurans CH34 heavy metal plasmids pMOL28 and pMOL30.</title>
        <authorList>
            <person name="van der Lelie D."/>
            <person name="Monchy S."/>
            <person name="Taghavi S."/>
            <person name="McCorkle S."/>
            <person name="Dunn J."/>
            <person name="Benotmane M."/>
            <person name="Vallaeys T."/>
            <person name="Lapidus A."/>
            <person name="Mergeay M."/>
        </authorList>
    </citation>
    <scope>NUCLEOTIDE SEQUENCE [LARGE SCALE GENOMIC DNA]</scope>
</reference>
<reference key="3">
    <citation type="journal article" date="2010" name="PLoS ONE">
        <title>The complete genome sequence of Cupriavidus metallidurans strain CH34, a master survivalist in harsh and anthropogenic environments.</title>
        <authorList>
            <person name="Janssen P.J."/>
            <person name="Van Houdt R."/>
            <person name="Moors H."/>
            <person name="Monsieurs P."/>
            <person name="Morin N."/>
            <person name="Michaux A."/>
            <person name="Benotmane M.A."/>
            <person name="Leys N."/>
            <person name="Vallaeys T."/>
            <person name="Lapidus A."/>
            <person name="Monchy S."/>
            <person name="Medigue C."/>
            <person name="Taghavi S."/>
            <person name="McCorkle S."/>
            <person name="Dunn J."/>
            <person name="van der Lelie D."/>
            <person name="Mergeay M."/>
        </authorList>
    </citation>
    <scope>NUCLEOTIDE SEQUENCE [LARGE SCALE GENOMIC DNA]</scope>
    <source>
        <strain>ATCC 43123 / DSM 2839 / NBRC 102507 / CH34</strain>
    </source>
</reference>
<reference key="4">
    <citation type="journal article" date="2000" name="J. Bacteriol.">
        <title>Regulation of the cnr cobalt and nickel resistance determinant from Ralstonia sp. strain CH34.</title>
        <authorList>
            <person name="Grass G."/>
            <person name="Grosse C."/>
            <person name="Nies D.H."/>
        </authorList>
    </citation>
    <scope>INDUCTION</scope>
</reference>
<proteinExistence type="evidence at transcript level"/>
<organism>
    <name type="scientific">Cupriavidus metallidurans (strain ATCC 43123 / DSM 2839 / NBRC 102507 / CH34)</name>
    <name type="common">Ralstonia metallidurans</name>
    <dbReference type="NCBI Taxonomy" id="266264"/>
    <lineage>
        <taxon>Bacteria</taxon>
        <taxon>Pseudomonadati</taxon>
        <taxon>Pseudomonadota</taxon>
        <taxon>Betaproteobacteria</taxon>
        <taxon>Burkholderiales</taxon>
        <taxon>Burkholderiaceae</taxon>
        <taxon>Cupriavidus</taxon>
    </lineage>
</organism>
<sequence length="1076" mass="115738">MIESILSGSVRYRWLVLFLTAVVAVIGAWQLNLLPIDVTPDITNKQVQINSVVPTMSPVEVEKRVTYPIETAIAGLNGVESTRSMSRNGFSQVTVIFKESANLYFMRQQVSERLAQARPNLPENVEPQMGPVSTGLGEVFHYSVEYQYPDGTGASIKDGEPGWQSDGSFLTERGERLDDRVSRLAYLRTVQDWIIRPQLRTTPGVADVDSLGGYVKQFVVEPDTGKMAAYGVSYADLARALEDTNLSVGANFIRRSGESYLVRADARIKSADEISRAVIAQRQNVPITVGQVARVKIGGELRSGAASRNGNETVVGSALMLVGANSRTVAQAVGDKLEQISKTLPPGVVIVPTLNRSQLVIATIETVAKNLIEGALLVVAILFALLGNWRAATIAALVIPLSLLVSAIGMNQFHISGNLMSLGALDFGLIIDGAVIIVENSLRRLAERQHREGRLLTLDERLQEVVQSSREMVRPTVYGQLVIFMVFLPCLTFQGVEGKMFSPMVITLMLALASAFVLSLTFVPAMVAVMLRKKVAETEVRVIVATKESYRPWLEHAVARPMPFIGAGIATVAVATVAFTFVGREFMPTLDELNLNLSSVRIPSTSIDQSVAIDLPLERAVLSLPEVQTVYSKAGTASLAADPMPPNASDNYIILKPKSEWPEGVTTKEQVIERIREKTAPMVGNNYDVTQPIEMRFNELIGGVRSDVAVKVYGENLDELAATAQRIAAVLKKTPGATDVRVPLTSGFPTFDIVFDRAAIARYGLTVKEVADTISTAMAGRPAGQIFDGDRRFDIVIRLPGEQRENLDVLGALPVMLPLSEGQARASVPLRQLVQFRFTQGLNEVSRDNGKRRVYVEANVGGRDLGSFVDDAAARIAKEVKLPPGMYIEWGGQFQNLQAATKRLAIIVPLCFILIAATLYMAIGSAALTATVLTAVPLALAGGVFALLLRGIPFSISAAVGFIAVSGVAVLNGLVLISAIRKRLDDGMAPDAAVIEGAMERVRPVLMTALVASLGFVPMAIATGTGAEVQKPLATVVIGGLVTATVLTLFVLPALCGIVLKRRTAGRPEAQAALEA</sequence>